<evidence type="ECO:0000250" key="1"/>
<evidence type="ECO:0000250" key="2">
    <source>
        <dbReference type="UniProtKB" id="P27546"/>
    </source>
</evidence>
<evidence type="ECO:0000250" key="3">
    <source>
        <dbReference type="UniProtKB" id="P27816"/>
    </source>
</evidence>
<evidence type="ECO:0000256" key="4">
    <source>
        <dbReference type="SAM" id="MobiDB-lite"/>
    </source>
</evidence>
<evidence type="ECO:0000269" key="5">
    <source>
    </source>
</evidence>
<evidence type="ECO:0000303" key="6">
    <source>
    </source>
</evidence>
<evidence type="ECO:0000305" key="7">
    <source>
    </source>
</evidence>
<evidence type="ECO:0007744" key="8">
    <source>
    </source>
</evidence>
<dbReference type="EMBL" id="BC088405">
    <property type="protein sequence ID" value="AAH88405.1"/>
    <property type="molecule type" value="mRNA"/>
</dbReference>
<dbReference type="EMBL" id="AB175782">
    <property type="protein sequence ID" value="BAD14292.1"/>
    <property type="molecule type" value="mRNA"/>
</dbReference>
<dbReference type="EMBL" id="AB175783">
    <property type="protein sequence ID" value="BAD14293.1"/>
    <property type="molecule type" value="mRNA"/>
</dbReference>
<dbReference type="RefSeq" id="NP_001019449.1">
    <molecule id="Q5M7W5-1"/>
    <property type="nucleotide sequence ID" value="NM_001024278.2"/>
</dbReference>
<dbReference type="BioGRID" id="266360">
    <property type="interactions" value="3"/>
</dbReference>
<dbReference type="FunCoup" id="Q5M7W5">
    <property type="interactions" value="1771"/>
</dbReference>
<dbReference type="IntAct" id="Q5M7W5">
    <property type="interactions" value="2"/>
</dbReference>
<dbReference type="MINT" id="Q5M7W5"/>
<dbReference type="GlyGen" id="Q5M7W5">
    <property type="glycosylation" value="5 sites, 1 O-linked glycan (3 sites)"/>
</dbReference>
<dbReference type="iPTMnet" id="Q5M7W5"/>
<dbReference type="PhosphoSitePlus" id="Q5M7W5"/>
<dbReference type="jPOST" id="Q5M7W5"/>
<dbReference type="PaxDb" id="10116-ENSRNOP00000053011"/>
<dbReference type="GeneID" id="367171"/>
<dbReference type="KEGG" id="rno:367171"/>
<dbReference type="UCSC" id="RGD:1564359">
    <molecule id="Q5M7W5-1"/>
    <property type="organism name" value="rat"/>
</dbReference>
<dbReference type="AGR" id="RGD:1564359"/>
<dbReference type="CTD" id="4134"/>
<dbReference type="RGD" id="1564359">
    <property type="gene designation" value="Map4"/>
</dbReference>
<dbReference type="VEuPathDB" id="HostDB:ENSRNOG00000020748"/>
<dbReference type="eggNOG" id="KOG2418">
    <property type="taxonomic scope" value="Eukaryota"/>
</dbReference>
<dbReference type="HOGENOM" id="CLU_012370_0_0_1"/>
<dbReference type="InParanoid" id="Q5M7W5"/>
<dbReference type="PhylomeDB" id="Q5M7W5"/>
<dbReference type="PRO" id="PR:Q5M7W5"/>
<dbReference type="Proteomes" id="UP000002494">
    <property type="component" value="Chromosome 8"/>
</dbReference>
<dbReference type="Bgee" id="ENSRNOG00000020748">
    <property type="expression patterns" value="Expressed in skeletal muscle tissue and 19 other cell types or tissues"/>
</dbReference>
<dbReference type="ExpressionAtlas" id="Q5M7W5">
    <property type="expression patterns" value="baseline and differential"/>
</dbReference>
<dbReference type="GO" id="GO:0030424">
    <property type="term" value="C:axon"/>
    <property type="evidence" value="ECO:0000314"/>
    <property type="project" value="ARUK-UCL"/>
</dbReference>
<dbReference type="GO" id="GO:0005930">
    <property type="term" value="C:axoneme"/>
    <property type="evidence" value="ECO:0000266"/>
    <property type="project" value="RGD"/>
</dbReference>
<dbReference type="GO" id="GO:0005874">
    <property type="term" value="C:microtubule"/>
    <property type="evidence" value="ECO:0000266"/>
    <property type="project" value="RGD"/>
</dbReference>
<dbReference type="GO" id="GO:0005815">
    <property type="term" value="C:microtubule organizing center"/>
    <property type="evidence" value="ECO:0000266"/>
    <property type="project" value="RGD"/>
</dbReference>
<dbReference type="GO" id="GO:0072686">
    <property type="term" value="C:mitotic spindle"/>
    <property type="evidence" value="ECO:0000266"/>
    <property type="project" value="RGD"/>
</dbReference>
<dbReference type="GO" id="GO:0043005">
    <property type="term" value="C:neuron projection"/>
    <property type="evidence" value="ECO:0000318"/>
    <property type="project" value="GO_Central"/>
</dbReference>
<dbReference type="GO" id="GO:0014069">
    <property type="term" value="C:postsynaptic density"/>
    <property type="evidence" value="ECO:0000266"/>
    <property type="project" value="RGD"/>
</dbReference>
<dbReference type="GO" id="GO:0008017">
    <property type="term" value="F:microtubule binding"/>
    <property type="evidence" value="ECO:0000266"/>
    <property type="project" value="RGD"/>
</dbReference>
<dbReference type="GO" id="GO:0140778">
    <property type="term" value="F:microtubule stabilizing activity"/>
    <property type="evidence" value="ECO:0000266"/>
    <property type="project" value="RGD"/>
</dbReference>
<dbReference type="GO" id="GO:0051301">
    <property type="term" value="P:cell division"/>
    <property type="evidence" value="ECO:0000266"/>
    <property type="project" value="RGD"/>
</dbReference>
<dbReference type="GO" id="GO:0061523">
    <property type="term" value="P:cilium disassembly"/>
    <property type="evidence" value="ECO:0000266"/>
    <property type="project" value="RGD"/>
</dbReference>
<dbReference type="GO" id="GO:0051294">
    <property type="term" value="P:establishment of spindle orientation"/>
    <property type="evidence" value="ECO:0000266"/>
    <property type="project" value="RGD"/>
</dbReference>
<dbReference type="GO" id="GO:0000226">
    <property type="term" value="P:microtubule cytoskeleton organization"/>
    <property type="evidence" value="ECO:0000266"/>
    <property type="project" value="RGD"/>
</dbReference>
<dbReference type="GO" id="GO:0046785">
    <property type="term" value="P:microtubule polymerization"/>
    <property type="evidence" value="ECO:0000266"/>
    <property type="project" value="RGD"/>
</dbReference>
<dbReference type="GO" id="GO:0051012">
    <property type="term" value="P:microtubule sliding"/>
    <property type="evidence" value="ECO:0000266"/>
    <property type="project" value="RGD"/>
</dbReference>
<dbReference type="GO" id="GO:0007052">
    <property type="term" value="P:mitotic spindle organization"/>
    <property type="evidence" value="ECO:0000266"/>
    <property type="project" value="RGD"/>
</dbReference>
<dbReference type="GO" id="GO:1902856">
    <property type="term" value="P:negative regulation of non-motile cilium assembly"/>
    <property type="evidence" value="ECO:0000266"/>
    <property type="project" value="RGD"/>
</dbReference>
<dbReference type="GO" id="GO:0031175">
    <property type="term" value="P:neuron projection development"/>
    <property type="evidence" value="ECO:0000318"/>
    <property type="project" value="GO_Central"/>
</dbReference>
<dbReference type="InterPro" id="IPR027324">
    <property type="entry name" value="MAP2/MAP4/Tau"/>
</dbReference>
<dbReference type="InterPro" id="IPR001084">
    <property type="entry name" value="MAP_tubulin-bd_rpt"/>
</dbReference>
<dbReference type="PANTHER" id="PTHR11501">
    <property type="entry name" value="MICROTUBULE-ASSOCIATED PROTEIN"/>
    <property type="match status" value="1"/>
</dbReference>
<dbReference type="PANTHER" id="PTHR11501:SF16">
    <property type="entry name" value="MICROTUBULE-ASSOCIATED PROTEIN 4"/>
    <property type="match status" value="1"/>
</dbReference>
<dbReference type="Pfam" id="PF00418">
    <property type="entry name" value="Tubulin-binding"/>
    <property type="match status" value="3"/>
</dbReference>
<dbReference type="PROSITE" id="PS00229">
    <property type="entry name" value="TAU_MAP_1"/>
    <property type="match status" value="3"/>
</dbReference>
<dbReference type="PROSITE" id="PS51491">
    <property type="entry name" value="TAU_MAP_2"/>
    <property type="match status" value="3"/>
</dbReference>
<reference key="1">
    <citation type="journal article" date="2004" name="Genome Res.">
        <title>The status, quality, and expansion of the NIH full-length cDNA project: the Mammalian Gene Collection (MGC).</title>
        <authorList>
            <consortium name="The MGC Project Team"/>
        </authorList>
    </citation>
    <scope>NUCLEOTIDE SEQUENCE [LARGE SCALE MRNA] (ISOFORM 1)</scope>
    <source>
        <tissue>Kidney</tissue>
    </source>
</reference>
<reference key="2">
    <citation type="journal article" date="2005" name="Cell Struct. Funct.">
        <title>Identification of a neural cell specific variant of microtubule-associated protein 4.</title>
        <authorList>
            <person name="Matsushima K."/>
            <person name="Aosaki M."/>
            <person name="Tokuraku K."/>
            <person name="Hasan M.R."/>
            <person name="Nakagawa H."/>
            <person name="Kotani S."/>
        </authorList>
    </citation>
    <scope>NUCLEOTIDE SEQUENCE [MRNA] OF 653-827 (ISOFORMS 1 AND 2)</scope>
</reference>
<reference key="3">
    <citation type="journal article" date="1997" name="Cell">
        <title>MARK - a novel family of protein kinases that phosphorylate microtubule-associated proteins and trigger microtubule disruption.</title>
        <authorList>
            <person name="Drewes G."/>
            <person name="Ebneth A."/>
            <person name="Preuss U."/>
            <person name="Mandelkow E.-M."/>
            <person name="Mandelkow E."/>
        </authorList>
    </citation>
    <scope>PHOSPHORYLATION AT SER-915</scope>
    <source>
        <strain>Sprague-Dawley</strain>
        <tissue>Brain</tissue>
    </source>
</reference>
<reference key="4">
    <citation type="journal article" date="2012" name="Nat. Commun.">
        <title>Quantitative maps of protein phosphorylation sites across 14 different rat organs and tissues.</title>
        <authorList>
            <person name="Lundby A."/>
            <person name="Secher A."/>
            <person name="Lage K."/>
            <person name="Nordsborg N.B."/>
            <person name="Dmytriyev A."/>
            <person name="Lundby C."/>
            <person name="Olsen J.V."/>
        </authorList>
    </citation>
    <scope>PHOSPHORYLATION [LARGE SCALE ANALYSIS] AT SER-257; SER-509; SER-515; SER-520; SER-522; SER-618; THR-659; SER-902; SER-915 AND SER-978</scope>
    <scope>IDENTIFICATION BY MASS SPECTROMETRY [LARGE SCALE ANALYSIS]</scope>
</reference>
<proteinExistence type="evidence at protein level"/>
<organism>
    <name type="scientific">Rattus norvegicus</name>
    <name type="common">Rat</name>
    <dbReference type="NCBI Taxonomy" id="10116"/>
    <lineage>
        <taxon>Eukaryota</taxon>
        <taxon>Metazoa</taxon>
        <taxon>Chordata</taxon>
        <taxon>Craniata</taxon>
        <taxon>Vertebrata</taxon>
        <taxon>Euteleostomi</taxon>
        <taxon>Mammalia</taxon>
        <taxon>Eutheria</taxon>
        <taxon>Euarchontoglires</taxon>
        <taxon>Glires</taxon>
        <taxon>Rodentia</taxon>
        <taxon>Myomorpha</taxon>
        <taxon>Muroidea</taxon>
        <taxon>Muridae</taxon>
        <taxon>Murinae</taxon>
        <taxon>Rattus</taxon>
    </lineage>
</organism>
<protein>
    <recommendedName>
        <fullName>Microtubule-associated protein 4</fullName>
        <shortName>MAP-4</shortName>
    </recommendedName>
</protein>
<sequence length="1057" mass="110301">MADLSLVDALTEPPPEIEGEIKRDFMAALEAEPYDDIVGETVEKTEFIPLLDGDEKSGNSESKRKPCVDTSQVEDIPSSKPTLLANGDHGVEGNNTTGSPTDFLVENVDYEDYQNSQSWPEDASFCFQPQQVLDTNQADPFNVHHDDGLADLLFVSSGPTNASAFIEENNPLEDSYGVLPCDSFAPTAVVSQEWSVGAPDSPHSEPCVSPEVTIETAQPATELSKAVDLESVKEQLPAKALEMMAGQTTDAVPSKESEGSPDTDAAPGPDTDVTLTKDIEESSSPDVISANVTQPFTESDMFLTQEMELLIGTEAAQVKDTMSSVEPDISSAKNTAPPTEEETVPGKDMTFPKEAETALPIEMDLAPPEDVALPKETELELAPAAGTAPLSETEVALAKDEEPSTGIPAAQEMLLSSETEVVLPSDSIMTLTKEVTVPLEAAGPLVSDMTAILETEMTLGGGTATPTETKLGKVKDMAPLPESEVALGKDVVTLPETKVTEFNNVTPLSEEEVASIKDVSPSPETETAKNADLHSGTELTLDNSMTPPSDPALPLETKVATVQIKDKETVQTQEELSEDSQLESVQLEGQSAVPPCTISPEPVKAADQKSTLPVDEGSPLEKLEQKETSGSQPPELCSGVSRQEEGKAAVGLTGNDIATPPNKELPPSPEKKAKPLATTQPAKTSTSKAKIQPTSLPKQPAPTTSGGLNKKPMSLASGSVPAAPHKRPAAATATARPSTLPARDLKPKPITETKVAEKRTSPSKPSSAPALRPGPKTTPTISKATSPSTLVSTGSSSRSPSTTLPKRPTTTKTEGKPADVKRMTAKSATADLSRSKTTSASSVKRNTTPTGATPPAGMASTRVKPMSAPCRSSVALSVDKKPTSTKPSSSAPRVSRLATTVSAPDLKSVRSKVGSTENMKHQPGGGRVQIQNKKVDISKVSSKCGSKANIKHKPGGGDVKIESQKLNFKEKAQAKVGSLDNVGHLPAGGTVKTEGGGSEAPPCPGPPAGEEPAIPEAAPDAGAPTSASGLSGHTTLSGGGDQREPQTLDSQIQETSI</sequence>
<feature type="initiator methionine" description="Removed" evidence="3">
    <location>
        <position position="1"/>
    </location>
</feature>
<feature type="chain" id="PRO_0000323721" description="Microtubule-associated protein 4">
    <location>
        <begin position="2"/>
        <end position="1057"/>
    </location>
</feature>
<feature type="repeat" description="Tau/MAP 1">
    <location>
        <begin position="897"/>
        <end position="927"/>
    </location>
</feature>
<feature type="repeat" description="Tau/MAP 2">
    <location>
        <begin position="928"/>
        <end position="958"/>
    </location>
</feature>
<feature type="repeat" description="Tau/MAP 3">
    <location>
        <begin position="959"/>
        <end position="990"/>
    </location>
</feature>
<feature type="region of interest" description="Disordered" evidence="4">
    <location>
        <begin position="49"/>
        <end position="98"/>
    </location>
</feature>
<feature type="region of interest" description="Disordered" evidence="4">
    <location>
        <begin position="246"/>
        <end position="276"/>
    </location>
</feature>
<feature type="region of interest" description="Disordered" evidence="4">
    <location>
        <begin position="327"/>
        <end position="347"/>
    </location>
</feature>
<feature type="region of interest" description="Disordered" evidence="4">
    <location>
        <begin position="382"/>
        <end position="404"/>
    </location>
</feature>
<feature type="region of interest" description="Disordered" evidence="4">
    <location>
        <begin position="503"/>
        <end position="555"/>
    </location>
</feature>
<feature type="region of interest" description="Disordered" evidence="4">
    <location>
        <begin position="569"/>
        <end position="927"/>
    </location>
</feature>
<feature type="region of interest" description="Disordered" evidence="4">
    <location>
        <begin position="977"/>
        <end position="1057"/>
    </location>
</feature>
<feature type="compositionally biased region" description="Basic and acidic residues" evidence="4">
    <location>
        <begin position="53"/>
        <end position="67"/>
    </location>
</feature>
<feature type="compositionally biased region" description="Low complexity" evidence="4">
    <location>
        <begin position="262"/>
        <end position="272"/>
    </location>
</feature>
<feature type="compositionally biased region" description="Polar residues" evidence="4">
    <location>
        <begin position="537"/>
        <end position="547"/>
    </location>
</feature>
<feature type="compositionally biased region" description="Polar residues" evidence="4">
    <location>
        <begin position="677"/>
        <end position="707"/>
    </location>
</feature>
<feature type="compositionally biased region" description="Low complexity" evidence="4">
    <location>
        <begin position="729"/>
        <end position="742"/>
    </location>
</feature>
<feature type="compositionally biased region" description="Basic and acidic residues" evidence="4">
    <location>
        <begin position="743"/>
        <end position="760"/>
    </location>
</feature>
<feature type="compositionally biased region" description="Low complexity" evidence="4">
    <location>
        <begin position="785"/>
        <end position="812"/>
    </location>
</feature>
<feature type="compositionally biased region" description="Basic and acidic residues" evidence="4">
    <location>
        <begin position="813"/>
        <end position="822"/>
    </location>
</feature>
<feature type="compositionally biased region" description="Polar residues" evidence="4">
    <location>
        <begin position="826"/>
        <end position="846"/>
    </location>
</feature>
<feature type="compositionally biased region" description="Low complexity" evidence="4">
    <location>
        <begin position="847"/>
        <end position="857"/>
    </location>
</feature>
<feature type="compositionally biased region" description="Low complexity" evidence="4">
    <location>
        <begin position="1010"/>
        <end position="1036"/>
    </location>
</feature>
<feature type="compositionally biased region" description="Polar residues" evidence="4">
    <location>
        <begin position="1047"/>
        <end position="1057"/>
    </location>
</feature>
<feature type="modified residue" description="N-acetylalanine" evidence="3">
    <location>
        <position position="2"/>
    </location>
</feature>
<feature type="modified residue" description="Phosphoserine" evidence="3">
    <location>
        <position position="5"/>
    </location>
</feature>
<feature type="modified residue" description="Phosphoserine" evidence="3">
    <location>
        <position position="60"/>
    </location>
</feature>
<feature type="modified residue" description="Phosphoserine" evidence="3">
    <location>
        <position position="99"/>
    </location>
</feature>
<feature type="modified residue" description="Phosphoserine" evidence="2">
    <location>
        <position position="254"/>
    </location>
</feature>
<feature type="modified residue" description="Phosphoserine" evidence="8">
    <location>
        <position position="257"/>
    </location>
</feature>
<feature type="modified residue" description="Phosphoserine" evidence="3">
    <location>
        <position position="417"/>
    </location>
</feature>
<feature type="modified residue" description="Phosphothreonine" evidence="3">
    <location>
        <position position="419"/>
    </location>
</feature>
<feature type="modified residue" description="Phosphothreonine" evidence="2">
    <location>
        <position position="450"/>
    </location>
</feature>
<feature type="modified residue" description="Phosphothreonine" evidence="3">
    <location>
        <position position="497"/>
    </location>
</feature>
<feature type="modified residue" description="Phosphothreonine" evidence="2">
    <location>
        <position position="506"/>
    </location>
</feature>
<feature type="modified residue" description="Phosphoserine" evidence="8">
    <location>
        <position position="509"/>
    </location>
</feature>
<feature type="modified residue" description="Phosphoserine" evidence="8">
    <location>
        <position position="515"/>
    </location>
</feature>
<feature type="modified residue" description="Phosphoserine" evidence="8">
    <location>
        <position position="520"/>
    </location>
</feature>
<feature type="modified residue" description="Phosphoserine" evidence="8">
    <location>
        <position position="522"/>
    </location>
</feature>
<feature type="modified residue" description="Phosphothreonine" evidence="3">
    <location>
        <position position="546"/>
    </location>
</feature>
<feature type="modified residue" description="Phosphoserine" evidence="3">
    <location>
        <position position="599"/>
    </location>
</feature>
<feature type="modified residue" description="Phosphoserine" evidence="8">
    <location>
        <position position="618"/>
    </location>
</feature>
<feature type="modified residue" description="Phosphothreonine" evidence="8">
    <location>
        <position position="659"/>
    </location>
</feature>
<feature type="modified residue" description="Phosphoserine" evidence="3">
    <location>
        <position position="668"/>
    </location>
</feature>
<feature type="modified residue" description="Phosphoserine" evidence="3">
    <location>
        <position position="685"/>
    </location>
</feature>
<feature type="modified residue" description="Phosphoserine" evidence="3">
    <location>
        <position position="695"/>
    </location>
</feature>
<feature type="modified residue" description="Phosphoserine" evidence="3">
    <location>
        <position position="761"/>
    </location>
</feature>
<feature type="modified residue" description="Phosphoserine" evidence="3">
    <location>
        <position position="799"/>
    </location>
</feature>
<feature type="modified residue" description="Phosphoserine" evidence="3">
    <location>
        <position position="801"/>
    </location>
</feature>
<feature type="modified residue" description="Phosphoserine" evidence="3">
    <location>
        <position position="827"/>
    </location>
</feature>
<feature type="modified residue" description="Phosphoserine" evidence="8">
    <location>
        <position position="902"/>
    </location>
</feature>
<feature type="modified residue" description="Phosphoserine" evidence="8">
    <location>
        <position position="915"/>
    </location>
</feature>
<feature type="modified residue" description="Phosphoserine; by MARK1" evidence="7 8">
    <location>
        <position position="915"/>
    </location>
</feature>
<feature type="modified residue" description="Phosphothreonine" evidence="3">
    <location>
        <position position="916"/>
    </location>
</feature>
<feature type="modified residue" description="Phosphoserine" evidence="8">
    <location>
        <position position="978"/>
    </location>
</feature>
<feature type="modified residue" description="Phosphoserine" evidence="3">
    <location>
        <position position="1050"/>
    </location>
</feature>
<feature type="modified residue" description="Phosphoserine" evidence="3">
    <location>
        <position position="1056"/>
    </location>
</feature>
<feature type="cross-link" description="Glycyl lysine isopeptide (Lys-Gly) (interchain with G-Cter in SUMO2)" evidence="3">
    <location>
        <position position="812"/>
    </location>
</feature>
<feature type="splice variant" id="VSP_032080" description="In isoform 2." evidence="6">
    <location>
        <begin position="674"/>
        <end position="747"/>
    </location>
</feature>
<keyword id="KW-0007">Acetylation</keyword>
<keyword id="KW-0025">Alternative splicing</keyword>
<keyword id="KW-0963">Cytoplasm</keyword>
<keyword id="KW-0206">Cytoskeleton</keyword>
<keyword id="KW-1017">Isopeptide bond</keyword>
<keyword id="KW-0493">Microtubule</keyword>
<keyword id="KW-0597">Phosphoprotein</keyword>
<keyword id="KW-1185">Reference proteome</keyword>
<keyword id="KW-0677">Repeat</keyword>
<keyword id="KW-0832">Ubl conjugation</keyword>
<accession>Q5M7W5</accession>
<accession>Q75NR5</accession>
<accession>Q75NR6</accession>
<gene>
    <name type="primary">Map4</name>
</gene>
<comment type="function">
    <text evidence="1">Non-neuronal microtubule-associated protein. Promotes microtubule assembly (By similarity).</text>
</comment>
<comment type="subunit">
    <text evidence="2 3">Interacts with SEPTIN2; this interaction impedes tubulin-binding. Interacts with TRAF3IP1 (By similarity). Interacts with KNSTRN (By similarity).</text>
</comment>
<comment type="subcellular location">
    <subcellularLocation>
        <location evidence="3">Cytoplasm</location>
        <location evidence="3">Cytoskeleton</location>
    </subcellularLocation>
    <subcellularLocation>
        <location evidence="3">Cytoplasm</location>
        <location evidence="3">Cytoskeleton</location>
        <location evidence="3">Microtubule organizing center</location>
    </subcellularLocation>
    <text evidence="3">Recruitment to microtubule is inhibited by microtubules polyglutamylation.</text>
</comment>
<comment type="alternative products">
    <event type="alternative splicing"/>
    <isoform>
        <id>Q5M7W5-1</id>
        <name>1</name>
        <sequence type="displayed"/>
    </isoform>
    <isoform>
        <id>Q5M7W5-2</id>
        <name>2</name>
        <sequence type="described" ref="VSP_032080"/>
    </isoform>
</comment>
<comment type="PTM">
    <text evidence="5">Phosphorylation on Ser-761 negatively regulates MAP4 activity to promote microtubule assembly. Phosphorylated at serine residues in K-X-G-S motifs by MAP/microtubule affinity-regulating kinase (MARK1 or MARK2), causing detachment from microtubules, and their disassembly.</text>
</comment>
<name>MAP4_RAT</name>